<dbReference type="EC" id="5.2.1.8" evidence="1"/>
<dbReference type="EMBL" id="BX569689">
    <property type="protein sequence ID" value="CAE06580.1"/>
    <property type="molecule type" value="Genomic_DNA"/>
</dbReference>
<dbReference type="RefSeq" id="WP_011126943.1">
    <property type="nucleotide sequence ID" value="NC_005070.1"/>
</dbReference>
<dbReference type="SMR" id="Q7UA35"/>
<dbReference type="STRING" id="84588.SYNW0065"/>
<dbReference type="KEGG" id="syw:SYNW0065"/>
<dbReference type="eggNOG" id="COG0544">
    <property type="taxonomic scope" value="Bacteria"/>
</dbReference>
<dbReference type="HOGENOM" id="CLU_033058_3_1_3"/>
<dbReference type="Proteomes" id="UP000001422">
    <property type="component" value="Chromosome"/>
</dbReference>
<dbReference type="GO" id="GO:0005737">
    <property type="term" value="C:cytoplasm"/>
    <property type="evidence" value="ECO:0007669"/>
    <property type="project" value="UniProtKB-SubCell"/>
</dbReference>
<dbReference type="GO" id="GO:0003755">
    <property type="term" value="F:peptidyl-prolyl cis-trans isomerase activity"/>
    <property type="evidence" value="ECO:0007669"/>
    <property type="project" value="UniProtKB-UniRule"/>
</dbReference>
<dbReference type="GO" id="GO:0044183">
    <property type="term" value="F:protein folding chaperone"/>
    <property type="evidence" value="ECO:0007669"/>
    <property type="project" value="TreeGrafter"/>
</dbReference>
<dbReference type="GO" id="GO:0043022">
    <property type="term" value="F:ribosome binding"/>
    <property type="evidence" value="ECO:0007669"/>
    <property type="project" value="TreeGrafter"/>
</dbReference>
<dbReference type="GO" id="GO:0051083">
    <property type="term" value="P:'de novo' cotranslational protein folding"/>
    <property type="evidence" value="ECO:0007669"/>
    <property type="project" value="TreeGrafter"/>
</dbReference>
<dbReference type="GO" id="GO:0051301">
    <property type="term" value="P:cell division"/>
    <property type="evidence" value="ECO:0007669"/>
    <property type="project" value="UniProtKB-KW"/>
</dbReference>
<dbReference type="GO" id="GO:0061077">
    <property type="term" value="P:chaperone-mediated protein folding"/>
    <property type="evidence" value="ECO:0007669"/>
    <property type="project" value="TreeGrafter"/>
</dbReference>
<dbReference type="GO" id="GO:0015031">
    <property type="term" value="P:protein transport"/>
    <property type="evidence" value="ECO:0007669"/>
    <property type="project" value="UniProtKB-UniRule"/>
</dbReference>
<dbReference type="GO" id="GO:0043335">
    <property type="term" value="P:protein unfolding"/>
    <property type="evidence" value="ECO:0007669"/>
    <property type="project" value="TreeGrafter"/>
</dbReference>
<dbReference type="FunFam" id="3.10.50.40:FF:000001">
    <property type="entry name" value="Trigger factor"/>
    <property type="match status" value="1"/>
</dbReference>
<dbReference type="FunFam" id="3.30.70.1050:FF:000004">
    <property type="entry name" value="Trigger factor"/>
    <property type="match status" value="1"/>
</dbReference>
<dbReference type="Gene3D" id="3.10.50.40">
    <property type="match status" value="1"/>
</dbReference>
<dbReference type="Gene3D" id="3.30.70.1050">
    <property type="entry name" value="Trigger factor ribosome-binding domain"/>
    <property type="match status" value="1"/>
</dbReference>
<dbReference type="Gene3D" id="1.10.3120.10">
    <property type="entry name" value="Trigger factor, C-terminal domain"/>
    <property type="match status" value="1"/>
</dbReference>
<dbReference type="HAMAP" id="MF_00303">
    <property type="entry name" value="Trigger_factor_Tig"/>
    <property type="match status" value="1"/>
</dbReference>
<dbReference type="InterPro" id="IPR046357">
    <property type="entry name" value="PPIase_dom_sf"/>
</dbReference>
<dbReference type="InterPro" id="IPR001179">
    <property type="entry name" value="PPIase_FKBP_dom"/>
</dbReference>
<dbReference type="InterPro" id="IPR005215">
    <property type="entry name" value="Trig_fac"/>
</dbReference>
<dbReference type="InterPro" id="IPR008880">
    <property type="entry name" value="Trigger_fac_C"/>
</dbReference>
<dbReference type="InterPro" id="IPR037041">
    <property type="entry name" value="Trigger_fac_C_sf"/>
</dbReference>
<dbReference type="InterPro" id="IPR008881">
    <property type="entry name" value="Trigger_fac_ribosome-bd_bac"/>
</dbReference>
<dbReference type="InterPro" id="IPR036611">
    <property type="entry name" value="Trigger_fac_ribosome-bd_sf"/>
</dbReference>
<dbReference type="InterPro" id="IPR027304">
    <property type="entry name" value="Trigger_fact/SurA_dom_sf"/>
</dbReference>
<dbReference type="NCBIfam" id="TIGR00115">
    <property type="entry name" value="tig"/>
    <property type="match status" value="1"/>
</dbReference>
<dbReference type="PANTHER" id="PTHR30560">
    <property type="entry name" value="TRIGGER FACTOR CHAPERONE AND PEPTIDYL-PROLYL CIS/TRANS ISOMERASE"/>
    <property type="match status" value="1"/>
</dbReference>
<dbReference type="PANTHER" id="PTHR30560:SF3">
    <property type="entry name" value="TRIGGER FACTOR-LIKE PROTEIN TIG, CHLOROPLASTIC"/>
    <property type="match status" value="1"/>
</dbReference>
<dbReference type="Pfam" id="PF00254">
    <property type="entry name" value="FKBP_C"/>
    <property type="match status" value="1"/>
</dbReference>
<dbReference type="Pfam" id="PF05698">
    <property type="entry name" value="Trigger_C"/>
    <property type="match status" value="1"/>
</dbReference>
<dbReference type="Pfam" id="PF05697">
    <property type="entry name" value="Trigger_N"/>
    <property type="match status" value="1"/>
</dbReference>
<dbReference type="PIRSF" id="PIRSF003095">
    <property type="entry name" value="Trigger_factor"/>
    <property type="match status" value="1"/>
</dbReference>
<dbReference type="SUPFAM" id="SSF54534">
    <property type="entry name" value="FKBP-like"/>
    <property type="match status" value="1"/>
</dbReference>
<dbReference type="SUPFAM" id="SSF109998">
    <property type="entry name" value="Triger factor/SurA peptide-binding domain-like"/>
    <property type="match status" value="1"/>
</dbReference>
<dbReference type="SUPFAM" id="SSF102735">
    <property type="entry name" value="Trigger factor ribosome-binding domain"/>
    <property type="match status" value="1"/>
</dbReference>
<dbReference type="PROSITE" id="PS50059">
    <property type="entry name" value="FKBP_PPIASE"/>
    <property type="match status" value="1"/>
</dbReference>
<organism>
    <name type="scientific">Parasynechococcus marenigrum (strain WH8102)</name>
    <dbReference type="NCBI Taxonomy" id="84588"/>
    <lineage>
        <taxon>Bacteria</taxon>
        <taxon>Bacillati</taxon>
        <taxon>Cyanobacteriota</taxon>
        <taxon>Cyanophyceae</taxon>
        <taxon>Synechococcales</taxon>
        <taxon>Prochlorococcaceae</taxon>
        <taxon>Parasynechococcus</taxon>
        <taxon>Parasynechococcus marenigrum</taxon>
    </lineage>
</organism>
<protein>
    <recommendedName>
        <fullName evidence="1">Trigger factor</fullName>
        <shortName evidence="1">TF</shortName>
        <ecNumber evidence="1">5.2.1.8</ecNumber>
    </recommendedName>
    <alternativeName>
        <fullName evidence="1">PPIase</fullName>
    </alternativeName>
</protein>
<reference key="1">
    <citation type="journal article" date="2003" name="Nature">
        <title>The genome of a motile marine Synechococcus.</title>
        <authorList>
            <person name="Palenik B."/>
            <person name="Brahamsha B."/>
            <person name="Larimer F.W."/>
            <person name="Land M.L."/>
            <person name="Hauser L."/>
            <person name="Chain P."/>
            <person name="Lamerdin J.E."/>
            <person name="Regala W."/>
            <person name="Allen E.E."/>
            <person name="McCarren J."/>
            <person name="Paulsen I.T."/>
            <person name="Dufresne A."/>
            <person name="Partensky F."/>
            <person name="Webb E.A."/>
            <person name="Waterbury J."/>
        </authorList>
    </citation>
    <scope>NUCLEOTIDE SEQUENCE [LARGE SCALE GENOMIC DNA]</scope>
    <source>
        <strain>WH8102</strain>
    </source>
</reference>
<evidence type="ECO:0000255" key="1">
    <source>
        <dbReference type="HAMAP-Rule" id="MF_00303"/>
    </source>
</evidence>
<evidence type="ECO:0000256" key="2">
    <source>
        <dbReference type="SAM" id="MobiDB-lite"/>
    </source>
</evidence>
<proteinExistence type="inferred from homology"/>
<accession>Q7UA35</accession>
<feature type="chain" id="PRO_0000179450" description="Trigger factor">
    <location>
        <begin position="1"/>
        <end position="472"/>
    </location>
</feature>
<feature type="domain" description="PPIase FKBP-type" evidence="1">
    <location>
        <begin position="174"/>
        <end position="261"/>
    </location>
</feature>
<feature type="region of interest" description="Disordered" evidence="2">
    <location>
        <begin position="430"/>
        <end position="472"/>
    </location>
</feature>
<feature type="compositionally biased region" description="Basic residues" evidence="2">
    <location>
        <begin position="452"/>
        <end position="464"/>
    </location>
</feature>
<keyword id="KW-0131">Cell cycle</keyword>
<keyword id="KW-0132">Cell division</keyword>
<keyword id="KW-0143">Chaperone</keyword>
<keyword id="KW-0963">Cytoplasm</keyword>
<keyword id="KW-0413">Isomerase</keyword>
<keyword id="KW-0697">Rotamase</keyword>
<gene>
    <name evidence="1" type="primary">tig</name>
    <name type="ordered locus">SYNW0065</name>
</gene>
<comment type="function">
    <text evidence="1">Involved in protein export. Acts as a chaperone by maintaining the newly synthesized protein in an open conformation. Functions as a peptidyl-prolyl cis-trans isomerase.</text>
</comment>
<comment type="catalytic activity">
    <reaction evidence="1">
        <text>[protein]-peptidylproline (omega=180) = [protein]-peptidylproline (omega=0)</text>
        <dbReference type="Rhea" id="RHEA:16237"/>
        <dbReference type="Rhea" id="RHEA-COMP:10747"/>
        <dbReference type="Rhea" id="RHEA-COMP:10748"/>
        <dbReference type="ChEBI" id="CHEBI:83833"/>
        <dbReference type="ChEBI" id="CHEBI:83834"/>
        <dbReference type="EC" id="5.2.1.8"/>
    </reaction>
</comment>
<comment type="subcellular location">
    <subcellularLocation>
        <location>Cytoplasm</location>
    </subcellularLocation>
    <text evidence="1">About half TF is bound to the ribosome near the polypeptide exit tunnel while the other half is free in the cytoplasm.</text>
</comment>
<comment type="domain">
    <text evidence="1">Consists of 3 domains; the N-terminus binds the ribosome, the middle domain has PPIase activity, while the C-terminus has intrinsic chaperone activity on its own.</text>
</comment>
<comment type="similarity">
    <text evidence="1">Belongs to the FKBP-type PPIase family. Tig subfamily.</text>
</comment>
<name>TIG_PARMW</name>
<sequence length="472" mass="51464">MSAAALKVTTESRPGSRLAVTVTVPAERTKTSYEDAINSLSRSINLPGFRKGKVPRTVVIQQLGAVRIKASALETMVDGAWRDAIQQESLEPISQPELSGGFEGLLDSFTPGEAVTITLEADVAPTPKLKSTKGLKASFEPVAYDAAKVDEMLEDSRKQLATVVPVEGRAAEQGDIAVLGFKGTYSDDGSEIEGGSADSMDVDLEHGRMIPGFIEGVIGMAVGDSKTVDCQFPDDYPKEDARGRKAAFEIELKDLKTRELPELNDAFAKQASEQETLAELRQELEQRLKDDAERRQTSNRRDALIGALVEQLEVELPEALIQQESRNLLEQTAAQFAQQGMDVKSLFTPDLVRNLMQNSRPEAEERLRRSFALTALAEAEGISVEDDAVDAKIKEVKKELAADAKIDPQRLRQAVMDDLIQEQLMSWLEENSTLTEQAPAADDADDAEKPAAKKKPAAKKKTPAKSKTDAEA</sequence>